<name>Y1125_STRA5</name>
<reference key="1">
    <citation type="journal article" date="2002" name="Proc. Natl. Acad. Sci. U.S.A.">
        <title>Complete genome sequence and comparative genomic analysis of an emerging human pathogen, serotype V Streptococcus agalactiae.</title>
        <authorList>
            <person name="Tettelin H."/>
            <person name="Masignani V."/>
            <person name="Cieslewicz M.J."/>
            <person name="Eisen J.A."/>
            <person name="Peterson S.N."/>
            <person name="Wessels M.R."/>
            <person name="Paulsen I.T."/>
            <person name="Nelson K.E."/>
            <person name="Margarit I."/>
            <person name="Read T.D."/>
            <person name="Madoff L.C."/>
            <person name="Wolf A.M."/>
            <person name="Beanan M.J."/>
            <person name="Brinkac L.M."/>
            <person name="Daugherty S.C."/>
            <person name="DeBoy R.T."/>
            <person name="Durkin A.S."/>
            <person name="Kolonay J.F."/>
            <person name="Madupu R."/>
            <person name="Lewis M.R."/>
            <person name="Radune D."/>
            <person name="Fedorova N.B."/>
            <person name="Scanlan D."/>
            <person name="Khouri H.M."/>
            <person name="Mulligan S."/>
            <person name="Carty H.A."/>
            <person name="Cline R.T."/>
            <person name="Van Aken S.E."/>
            <person name="Gill J."/>
            <person name="Scarselli M."/>
            <person name="Mora M."/>
            <person name="Iacobini E.T."/>
            <person name="Brettoni C."/>
            <person name="Galli G."/>
            <person name="Mariani M."/>
            <person name="Vegni F."/>
            <person name="Maione D."/>
            <person name="Rinaudo D."/>
            <person name="Rappuoli R."/>
            <person name="Telford J.L."/>
            <person name="Kasper D.L."/>
            <person name="Grandi G."/>
            <person name="Fraser C.M."/>
        </authorList>
    </citation>
    <scope>NUCLEOTIDE SEQUENCE [LARGE SCALE GENOMIC DNA]</scope>
    <source>
        <strain>ATCC BAA-611 / 2603 V/R</strain>
    </source>
</reference>
<organism>
    <name type="scientific">Streptococcus agalactiae serotype V (strain ATCC BAA-611 / 2603 V/R)</name>
    <dbReference type="NCBI Taxonomy" id="208435"/>
    <lineage>
        <taxon>Bacteria</taxon>
        <taxon>Bacillati</taxon>
        <taxon>Bacillota</taxon>
        <taxon>Bacilli</taxon>
        <taxon>Lactobacillales</taxon>
        <taxon>Streptococcaceae</taxon>
        <taxon>Streptococcus</taxon>
    </lineage>
</organism>
<gene>
    <name type="ordered locus">SAG1125</name>
</gene>
<dbReference type="EMBL" id="AE009948">
    <property type="protein sequence ID" value="AAN00007.1"/>
    <property type="molecule type" value="Genomic_DNA"/>
</dbReference>
<dbReference type="RefSeq" id="NP_688134.1">
    <property type="nucleotide sequence ID" value="NC_004116.1"/>
</dbReference>
<dbReference type="RefSeq" id="WP_000897651.1">
    <property type="nucleotide sequence ID" value="NC_004116.1"/>
</dbReference>
<dbReference type="STRING" id="208435.SAG1125"/>
<dbReference type="KEGG" id="sag:SAG1125"/>
<dbReference type="PATRIC" id="fig|208435.3.peg.1132"/>
<dbReference type="HOGENOM" id="CLU_033541_2_1_9"/>
<dbReference type="OrthoDB" id="9811391at2"/>
<dbReference type="Proteomes" id="UP000000821">
    <property type="component" value="Chromosome"/>
</dbReference>
<dbReference type="GO" id="GO:0005886">
    <property type="term" value="C:plasma membrane"/>
    <property type="evidence" value="ECO:0007669"/>
    <property type="project" value="UniProtKB-SubCell"/>
</dbReference>
<dbReference type="InterPro" id="IPR018383">
    <property type="entry name" value="UPF0324_pro"/>
</dbReference>
<dbReference type="PANTHER" id="PTHR30106">
    <property type="entry name" value="INNER MEMBRANE PROTEIN YEIH-RELATED"/>
    <property type="match status" value="1"/>
</dbReference>
<dbReference type="PANTHER" id="PTHR30106:SF1">
    <property type="entry name" value="UPF0324 MEMBRANE PROTEIN FN0533"/>
    <property type="match status" value="1"/>
</dbReference>
<dbReference type="Pfam" id="PF03601">
    <property type="entry name" value="Cons_hypoth698"/>
    <property type="match status" value="1"/>
</dbReference>
<feature type="chain" id="PRO_0000157460" description="UPF0324 membrane protein SAG1125">
    <location>
        <begin position="1"/>
        <end position="335"/>
    </location>
</feature>
<feature type="transmembrane region" description="Helical" evidence="1">
    <location>
        <begin position="20"/>
        <end position="42"/>
    </location>
</feature>
<feature type="transmembrane region" description="Helical" evidence="1">
    <location>
        <begin position="57"/>
        <end position="79"/>
    </location>
</feature>
<feature type="transmembrane region" description="Helical" evidence="1">
    <location>
        <begin position="84"/>
        <end position="106"/>
    </location>
</feature>
<feature type="transmembrane region" description="Helical" evidence="1">
    <location>
        <begin position="116"/>
        <end position="138"/>
    </location>
</feature>
<feature type="transmembrane region" description="Helical" evidence="1">
    <location>
        <begin position="151"/>
        <end position="173"/>
    </location>
</feature>
<feature type="transmembrane region" description="Helical" evidence="1">
    <location>
        <begin position="210"/>
        <end position="232"/>
    </location>
</feature>
<feature type="transmembrane region" description="Helical" evidence="1">
    <location>
        <begin position="253"/>
        <end position="275"/>
    </location>
</feature>
<feature type="transmembrane region" description="Helical" evidence="1">
    <location>
        <begin position="285"/>
        <end position="304"/>
    </location>
</feature>
<feature type="transmembrane region" description="Helical" evidence="1">
    <location>
        <begin position="311"/>
        <end position="333"/>
    </location>
</feature>
<protein>
    <recommendedName>
        <fullName>UPF0324 membrane protein SAG1125</fullName>
    </recommendedName>
</protein>
<keyword id="KW-1003">Cell membrane</keyword>
<keyword id="KW-0472">Membrane</keyword>
<keyword id="KW-1185">Reference proteome</keyword>
<keyword id="KW-0812">Transmembrane</keyword>
<keyword id="KW-1133">Transmembrane helix</keyword>
<proteinExistence type="inferred from homology"/>
<sequence length="335" mass="35771">MLFKEKIPGLILCFIIAIPSWLLGLYLPLIGAPVFAILIGIIVGSFYQNRQLFNKGIAFTSKYILQTAVVLLGFGLNLMQVMKVGISSLPIIIMTISISLIIAYVLQKLFKLDKTIATLIGVGSSICGGSAIAATAPVINAKDDEVAQAISVIFLFNILAALIFPTLGNFIGLSDHGFALFAGTAVNDTSSVTATATAWDAINHSNTLGGATIVKLTRTLAIIPITIVLSIYHMKQTQKEQSVSVTKIFPKFVLYFILASLLTTIVASLGFSLRIFEPLKVLSKFFIVMAMGAIGINTNVSKLIKTGGKSILLGAACWLGIIIVSLTMQAILGTW</sequence>
<accession>Q8DZH6</accession>
<comment type="subcellular location">
    <subcellularLocation>
        <location evidence="2">Cell membrane</location>
        <topology evidence="2">Multi-pass membrane protein</topology>
    </subcellularLocation>
</comment>
<comment type="similarity">
    <text evidence="2">Belongs to the UPF0324 family.</text>
</comment>
<evidence type="ECO:0000255" key="1"/>
<evidence type="ECO:0000305" key="2"/>